<gene>
    <name evidence="1" type="primary">kdpA</name>
    <name type="ordered locus">ECIAI1_0674</name>
</gene>
<feature type="chain" id="PRO_1000119337" description="Potassium-transporting ATPase potassium-binding subunit">
    <location>
        <begin position="1"/>
        <end position="557"/>
    </location>
</feature>
<feature type="transmembrane region" description="Helical" evidence="1">
    <location>
        <begin position="5"/>
        <end position="25"/>
    </location>
</feature>
<feature type="transmembrane region" description="Helical" evidence="1">
    <location>
        <begin position="63"/>
        <end position="83"/>
    </location>
</feature>
<feature type="transmembrane region" description="Helical" evidence="1">
    <location>
        <begin position="132"/>
        <end position="152"/>
    </location>
</feature>
<feature type="transmembrane region" description="Helical" evidence="1">
    <location>
        <begin position="170"/>
        <end position="190"/>
    </location>
</feature>
<feature type="transmembrane region" description="Helical" evidence="1">
    <location>
        <begin position="253"/>
        <end position="273"/>
    </location>
</feature>
<feature type="transmembrane region" description="Helical" evidence="1">
    <location>
        <begin position="283"/>
        <end position="303"/>
    </location>
</feature>
<feature type="transmembrane region" description="Helical" evidence="1">
    <location>
        <begin position="329"/>
        <end position="349"/>
    </location>
</feature>
<feature type="transmembrane region" description="Helical" evidence="1">
    <location>
        <begin position="356"/>
        <end position="376"/>
    </location>
</feature>
<feature type="transmembrane region" description="Helical" evidence="1">
    <location>
        <begin position="379"/>
        <end position="399"/>
    </location>
</feature>
<feature type="transmembrane region" description="Helical" evidence="1">
    <location>
        <begin position="416"/>
        <end position="436"/>
    </location>
</feature>
<feature type="transmembrane region" description="Helical" evidence="1">
    <location>
        <begin position="484"/>
        <end position="504"/>
    </location>
</feature>
<feature type="transmembrane region" description="Helical" evidence="1">
    <location>
        <begin position="526"/>
        <end position="546"/>
    </location>
</feature>
<sequence length="557" mass="59161">MAAQGFLLIATFLLVLMVLARPLGSGLARLINDIPLPGTAGVERILFRLPGVSDHEMNWKQYLCAILGLNMLGLAVLFFMLLGQHYLPLNPQQLPGLSWDLALNTAVSFVTNTNWQSYSGETTLSYFSQMAGLTVQNFLSAASGIAVIFALIRAFTRQSMSTLGNAWVDLLRITLWVLVPVALLIALFFIQQGALQNFQPYQAVNTVEGAQQLLPMGPVASQEAIKMLGTNGGGFFNANSSHPFENPTALTNFVQMLAIFLIPTALCFAFGEVTGDRRQGRMLLWAMSVIFVICVGVVMWAEVQGNPHLLALGADSSINMEGKESRFGVLVSSLFAVVTTAASCGAVIAMHDSFTALGGMVPMWLMQIGEVVFGGVGSGLYGMMLFVLLAVFIAGLMIGRTPEYLGKKIDVREMKLTALAILVTPTLVLMGAALAMMTDAGRSAMLNPGPHGFSEVLYAVSSAANNNGSAFAGLSANSPFWNCLLAFCMFVGRFGVIIPVMAIAGSLVSKKSQPASSGTLPTHGPLFVGLLIGTVLLVGALTFIPALALGPVAEYLS</sequence>
<name>KDPA_ECO8A</name>
<evidence type="ECO:0000255" key="1">
    <source>
        <dbReference type="HAMAP-Rule" id="MF_00275"/>
    </source>
</evidence>
<protein>
    <recommendedName>
        <fullName evidence="1">Potassium-transporting ATPase potassium-binding subunit</fullName>
    </recommendedName>
    <alternativeName>
        <fullName evidence="1">ATP phosphohydrolase [potassium-transporting] A chain</fullName>
    </alternativeName>
    <alternativeName>
        <fullName evidence="1">Potassium-binding and translocating subunit A</fullName>
    </alternativeName>
    <alternativeName>
        <fullName evidence="1">Potassium-translocating ATPase A chain</fullName>
    </alternativeName>
</protein>
<accession>B7M5L4</accession>
<keyword id="KW-0997">Cell inner membrane</keyword>
<keyword id="KW-1003">Cell membrane</keyword>
<keyword id="KW-0406">Ion transport</keyword>
<keyword id="KW-0472">Membrane</keyword>
<keyword id="KW-0630">Potassium</keyword>
<keyword id="KW-0633">Potassium transport</keyword>
<keyword id="KW-0812">Transmembrane</keyword>
<keyword id="KW-1133">Transmembrane helix</keyword>
<keyword id="KW-0813">Transport</keyword>
<dbReference type="EMBL" id="CU928160">
    <property type="protein sequence ID" value="CAQ97542.1"/>
    <property type="molecule type" value="Genomic_DNA"/>
</dbReference>
<dbReference type="RefSeq" id="WP_000741112.1">
    <property type="nucleotide sequence ID" value="NC_011741.1"/>
</dbReference>
<dbReference type="SMR" id="B7M5L4"/>
<dbReference type="GeneID" id="75204949"/>
<dbReference type="KEGG" id="ecr:ECIAI1_0674"/>
<dbReference type="HOGENOM" id="CLU_018614_3_0_6"/>
<dbReference type="GO" id="GO:0005886">
    <property type="term" value="C:plasma membrane"/>
    <property type="evidence" value="ECO:0007669"/>
    <property type="project" value="UniProtKB-SubCell"/>
</dbReference>
<dbReference type="GO" id="GO:0008556">
    <property type="term" value="F:P-type potassium transmembrane transporter activity"/>
    <property type="evidence" value="ECO:0007669"/>
    <property type="project" value="InterPro"/>
</dbReference>
<dbReference type="GO" id="GO:0030955">
    <property type="term" value="F:potassium ion binding"/>
    <property type="evidence" value="ECO:0007669"/>
    <property type="project" value="UniProtKB-UniRule"/>
</dbReference>
<dbReference type="HAMAP" id="MF_00275">
    <property type="entry name" value="KdpA"/>
    <property type="match status" value="1"/>
</dbReference>
<dbReference type="InterPro" id="IPR004623">
    <property type="entry name" value="KdpA"/>
</dbReference>
<dbReference type="NCBIfam" id="TIGR00680">
    <property type="entry name" value="kdpA"/>
    <property type="match status" value="1"/>
</dbReference>
<dbReference type="PANTHER" id="PTHR30607">
    <property type="entry name" value="POTASSIUM-TRANSPORTING ATPASE A CHAIN"/>
    <property type="match status" value="1"/>
</dbReference>
<dbReference type="PANTHER" id="PTHR30607:SF2">
    <property type="entry name" value="POTASSIUM-TRANSPORTING ATPASE POTASSIUM-BINDING SUBUNIT"/>
    <property type="match status" value="1"/>
</dbReference>
<dbReference type="Pfam" id="PF03814">
    <property type="entry name" value="KdpA"/>
    <property type="match status" value="1"/>
</dbReference>
<dbReference type="PIRSF" id="PIRSF001294">
    <property type="entry name" value="K_ATPaseA"/>
    <property type="match status" value="1"/>
</dbReference>
<organism>
    <name type="scientific">Escherichia coli O8 (strain IAI1)</name>
    <dbReference type="NCBI Taxonomy" id="585034"/>
    <lineage>
        <taxon>Bacteria</taxon>
        <taxon>Pseudomonadati</taxon>
        <taxon>Pseudomonadota</taxon>
        <taxon>Gammaproteobacteria</taxon>
        <taxon>Enterobacterales</taxon>
        <taxon>Enterobacteriaceae</taxon>
        <taxon>Escherichia</taxon>
    </lineage>
</organism>
<reference key="1">
    <citation type="journal article" date="2009" name="PLoS Genet.">
        <title>Organised genome dynamics in the Escherichia coli species results in highly diverse adaptive paths.</title>
        <authorList>
            <person name="Touchon M."/>
            <person name="Hoede C."/>
            <person name="Tenaillon O."/>
            <person name="Barbe V."/>
            <person name="Baeriswyl S."/>
            <person name="Bidet P."/>
            <person name="Bingen E."/>
            <person name="Bonacorsi S."/>
            <person name="Bouchier C."/>
            <person name="Bouvet O."/>
            <person name="Calteau A."/>
            <person name="Chiapello H."/>
            <person name="Clermont O."/>
            <person name="Cruveiller S."/>
            <person name="Danchin A."/>
            <person name="Diard M."/>
            <person name="Dossat C."/>
            <person name="Karoui M.E."/>
            <person name="Frapy E."/>
            <person name="Garry L."/>
            <person name="Ghigo J.M."/>
            <person name="Gilles A.M."/>
            <person name="Johnson J."/>
            <person name="Le Bouguenec C."/>
            <person name="Lescat M."/>
            <person name="Mangenot S."/>
            <person name="Martinez-Jehanne V."/>
            <person name="Matic I."/>
            <person name="Nassif X."/>
            <person name="Oztas S."/>
            <person name="Petit M.A."/>
            <person name="Pichon C."/>
            <person name="Rouy Z."/>
            <person name="Ruf C.S."/>
            <person name="Schneider D."/>
            <person name="Tourret J."/>
            <person name="Vacherie B."/>
            <person name="Vallenet D."/>
            <person name="Medigue C."/>
            <person name="Rocha E.P.C."/>
            <person name="Denamur E."/>
        </authorList>
    </citation>
    <scope>NUCLEOTIDE SEQUENCE [LARGE SCALE GENOMIC DNA]</scope>
    <source>
        <strain>IAI1</strain>
    </source>
</reference>
<comment type="function">
    <text evidence="1">Part of the high-affinity ATP-driven potassium transport (or Kdp) system, which catalyzes the hydrolysis of ATP coupled with the electrogenic transport of potassium into the cytoplasm. This subunit binds the periplasmic potassium ions and delivers the ions to the membrane domain of KdpB through an intramembrane tunnel.</text>
</comment>
<comment type="subunit">
    <text evidence="1">The system is composed of three essential subunits: KdpA, KdpB and KdpC.</text>
</comment>
<comment type="subcellular location">
    <subcellularLocation>
        <location evidence="1">Cell inner membrane</location>
        <topology evidence="1">Multi-pass membrane protein</topology>
    </subcellularLocation>
</comment>
<comment type="similarity">
    <text evidence="1">Belongs to the KdpA family.</text>
</comment>
<proteinExistence type="inferred from homology"/>